<dbReference type="EMBL" id="AF008220">
    <property type="protein sequence ID" value="AAC00252.1"/>
    <property type="molecule type" value="Genomic_DNA"/>
</dbReference>
<dbReference type="EMBL" id="AL009126">
    <property type="protein sequence ID" value="CAB15019.1"/>
    <property type="molecule type" value="Genomic_DNA"/>
</dbReference>
<dbReference type="PIR" id="D70000">
    <property type="entry name" value="D70000"/>
</dbReference>
<dbReference type="RefSeq" id="NP_390919.1">
    <property type="nucleotide sequence ID" value="NC_000964.3"/>
</dbReference>
<dbReference type="RefSeq" id="WP_004398682.1">
    <property type="nucleotide sequence ID" value="NZ_OZ025638.1"/>
</dbReference>
<dbReference type="SMR" id="O35005"/>
<dbReference type="FunCoup" id="O35005">
    <property type="interactions" value="127"/>
</dbReference>
<dbReference type="STRING" id="224308.BSU30410"/>
<dbReference type="TCDB" id="3.A.1.122.19">
    <property type="family name" value="the atp-binding cassette (abc) superfamily"/>
</dbReference>
<dbReference type="PaxDb" id="224308-BSU30410"/>
<dbReference type="EnsemblBacteria" id="CAB15019">
    <property type="protein sequence ID" value="CAB15019"/>
    <property type="gene ID" value="BSU_30410"/>
</dbReference>
<dbReference type="GeneID" id="937247"/>
<dbReference type="KEGG" id="bsu:BSU30410"/>
<dbReference type="PATRIC" id="fig|224308.179.peg.3298"/>
<dbReference type="eggNOG" id="COG0577">
    <property type="taxonomic scope" value="Bacteria"/>
</dbReference>
<dbReference type="InParanoid" id="O35005"/>
<dbReference type="OrthoDB" id="9770099at2"/>
<dbReference type="PhylomeDB" id="O35005"/>
<dbReference type="BioCyc" id="BSUB:BSU30410-MONOMER"/>
<dbReference type="Proteomes" id="UP000001570">
    <property type="component" value="Chromosome"/>
</dbReference>
<dbReference type="GO" id="GO:0005886">
    <property type="term" value="C:plasma membrane"/>
    <property type="evidence" value="ECO:0000318"/>
    <property type="project" value="GO_Central"/>
</dbReference>
<dbReference type="GO" id="GO:0022857">
    <property type="term" value="F:transmembrane transporter activity"/>
    <property type="evidence" value="ECO:0000318"/>
    <property type="project" value="GO_Central"/>
</dbReference>
<dbReference type="InterPro" id="IPR003838">
    <property type="entry name" value="ABC3_permease_C"/>
</dbReference>
<dbReference type="InterPro" id="IPR025857">
    <property type="entry name" value="MacB_PCD"/>
</dbReference>
<dbReference type="InterPro" id="IPR050250">
    <property type="entry name" value="Macrolide_Exporter_MacB"/>
</dbReference>
<dbReference type="PANTHER" id="PTHR30572:SF4">
    <property type="entry name" value="ABC TRANSPORTER PERMEASE YTRF"/>
    <property type="match status" value="1"/>
</dbReference>
<dbReference type="PANTHER" id="PTHR30572">
    <property type="entry name" value="MEMBRANE COMPONENT OF TRANSPORTER-RELATED"/>
    <property type="match status" value="1"/>
</dbReference>
<dbReference type="Pfam" id="PF02687">
    <property type="entry name" value="FtsX"/>
    <property type="match status" value="1"/>
</dbReference>
<dbReference type="Pfam" id="PF12704">
    <property type="entry name" value="MacB_PCD"/>
    <property type="match status" value="1"/>
</dbReference>
<dbReference type="PROSITE" id="PS51257">
    <property type="entry name" value="PROKAR_LIPOPROTEIN"/>
    <property type="match status" value="1"/>
</dbReference>
<keyword id="KW-1003">Cell membrane</keyword>
<keyword id="KW-0175">Coiled coil</keyword>
<keyword id="KW-0449">Lipoprotein</keyword>
<keyword id="KW-0472">Membrane</keyword>
<keyword id="KW-0564">Palmitate</keyword>
<keyword id="KW-1185">Reference proteome</keyword>
<keyword id="KW-0732">Signal</keyword>
<keyword id="KW-0812">Transmembrane</keyword>
<keyword id="KW-1133">Transmembrane helix</keyword>
<evidence type="ECO:0000255" key="1"/>
<evidence type="ECO:0000255" key="2">
    <source>
        <dbReference type="PROSITE-ProRule" id="PRU00303"/>
    </source>
</evidence>
<evidence type="ECO:0000269" key="3">
    <source>
    </source>
</evidence>
<evidence type="ECO:0000305" key="4"/>
<reference key="1">
    <citation type="journal article" date="1997" name="Microbiology">
        <title>Sequencing and functional annotation of the Bacillus subtilis genes in the 200 kb rrnB-dnaB region.</title>
        <authorList>
            <person name="Lapidus A."/>
            <person name="Galleron N."/>
            <person name="Sorokin A."/>
            <person name="Ehrlich S.D."/>
        </authorList>
    </citation>
    <scope>NUCLEOTIDE SEQUENCE [GENOMIC DNA]</scope>
    <source>
        <strain>168</strain>
    </source>
</reference>
<reference key="2">
    <citation type="journal article" date="1997" name="Nature">
        <title>The complete genome sequence of the Gram-positive bacterium Bacillus subtilis.</title>
        <authorList>
            <person name="Kunst F."/>
            <person name="Ogasawara N."/>
            <person name="Moszer I."/>
            <person name="Albertini A.M."/>
            <person name="Alloni G."/>
            <person name="Azevedo V."/>
            <person name="Bertero M.G."/>
            <person name="Bessieres P."/>
            <person name="Bolotin A."/>
            <person name="Borchert S."/>
            <person name="Borriss R."/>
            <person name="Boursier L."/>
            <person name="Brans A."/>
            <person name="Braun M."/>
            <person name="Brignell S.C."/>
            <person name="Bron S."/>
            <person name="Brouillet S."/>
            <person name="Bruschi C.V."/>
            <person name="Caldwell B."/>
            <person name="Capuano V."/>
            <person name="Carter N.M."/>
            <person name="Choi S.-K."/>
            <person name="Codani J.-J."/>
            <person name="Connerton I.F."/>
            <person name="Cummings N.J."/>
            <person name="Daniel R.A."/>
            <person name="Denizot F."/>
            <person name="Devine K.M."/>
            <person name="Duesterhoeft A."/>
            <person name="Ehrlich S.D."/>
            <person name="Emmerson P.T."/>
            <person name="Entian K.-D."/>
            <person name="Errington J."/>
            <person name="Fabret C."/>
            <person name="Ferrari E."/>
            <person name="Foulger D."/>
            <person name="Fritz C."/>
            <person name="Fujita M."/>
            <person name="Fujita Y."/>
            <person name="Fuma S."/>
            <person name="Galizzi A."/>
            <person name="Galleron N."/>
            <person name="Ghim S.-Y."/>
            <person name="Glaser P."/>
            <person name="Goffeau A."/>
            <person name="Golightly E.J."/>
            <person name="Grandi G."/>
            <person name="Guiseppi G."/>
            <person name="Guy B.J."/>
            <person name="Haga K."/>
            <person name="Haiech J."/>
            <person name="Harwood C.R."/>
            <person name="Henaut A."/>
            <person name="Hilbert H."/>
            <person name="Holsappel S."/>
            <person name="Hosono S."/>
            <person name="Hullo M.-F."/>
            <person name="Itaya M."/>
            <person name="Jones L.-M."/>
            <person name="Joris B."/>
            <person name="Karamata D."/>
            <person name="Kasahara Y."/>
            <person name="Klaerr-Blanchard M."/>
            <person name="Klein C."/>
            <person name="Kobayashi Y."/>
            <person name="Koetter P."/>
            <person name="Koningstein G."/>
            <person name="Krogh S."/>
            <person name="Kumano M."/>
            <person name="Kurita K."/>
            <person name="Lapidus A."/>
            <person name="Lardinois S."/>
            <person name="Lauber J."/>
            <person name="Lazarevic V."/>
            <person name="Lee S.-M."/>
            <person name="Levine A."/>
            <person name="Liu H."/>
            <person name="Masuda S."/>
            <person name="Mauel C."/>
            <person name="Medigue C."/>
            <person name="Medina N."/>
            <person name="Mellado R.P."/>
            <person name="Mizuno M."/>
            <person name="Moestl D."/>
            <person name="Nakai S."/>
            <person name="Noback M."/>
            <person name="Noone D."/>
            <person name="O'Reilly M."/>
            <person name="Ogawa K."/>
            <person name="Ogiwara A."/>
            <person name="Oudega B."/>
            <person name="Park S.-H."/>
            <person name="Parro V."/>
            <person name="Pohl T.M."/>
            <person name="Portetelle D."/>
            <person name="Porwollik S."/>
            <person name="Prescott A.M."/>
            <person name="Presecan E."/>
            <person name="Pujic P."/>
            <person name="Purnelle B."/>
            <person name="Rapoport G."/>
            <person name="Rey M."/>
            <person name="Reynolds S."/>
            <person name="Rieger M."/>
            <person name="Rivolta C."/>
            <person name="Rocha E."/>
            <person name="Roche B."/>
            <person name="Rose M."/>
            <person name="Sadaie Y."/>
            <person name="Sato T."/>
            <person name="Scanlan E."/>
            <person name="Schleich S."/>
            <person name="Schroeter R."/>
            <person name="Scoffone F."/>
            <person name="Sekiguchi J."/>
            <person name="Sekowska A."/>
            <person name="Seror S.J."/>
            <person name="Serror P."/>
            <person name="Shin B.-S."/>
            <person name="Soldo B."/>
            <person name="Sorokin A."/>
            <person name="Tacconi E."/>
            <person name="Takagi T."/>
            <person name="Takahashi H."/>
            <person name="Takemaru K."/>
            <person name="Takeuchi M."/>
            <person name="Tamakoshi A."/>
            <person name="Tanaka T."/>
            <person name="Terpstra P."/>
            <person name="Tognoni A."/>
            <person name="Tosato V."/>
            <person name="Uchiyama S."/>
            <person name="Vandenbol M."/>
            <person name="Vannier F."/>
            <person name="Vassarotti A."/>
            <person name="Viari A."/>
            <person name="Wambutt R."/>
            <person name="Wedler E."/>
            <person name="Wedler H."/>
            <person name="Weitzenegger T."/>
            <person name="Winters P."/>
            <person name="Wipat A."/>
            <person name="Yamamoto H."/>
            <person name="Yamane K."/>
            <person name="Yasumoto K."/>
            <person name="Yata K."/>
            <person name="Yoshida K."/>
            <person name="Yoshikawa H.-F."/>
            <person name="Zumstein E."/>
            <person name="Yoshikawa H."/>
            <person name="Danchin A."/>
        </authorList>
    </citation>
    <scope>NUCLEOTIDE SEQUENCE [LARGE SCALE GENOMIC DNA]</scope>
    <source>
        <strain>168</strain>
    </source>
</reference>
<reference key="3">
    <citation type="journal article" date="2000" name="J. Bacteriol.">
        <title>An operon for a putative ATP-binding cassette transport system involved in acetoin utilization of Bacillus subtilis.</title>
        <authorList>
            <person name="Yoshida K."/>
            <person name="Fujita Y."/>
            <person name="Ehrlich S.D."/>
        </authorList>
    </citation>
    <scope>FUNCTION</scope>
    <scope>DEVELOPMENTAL STAGE</scope>
    <scope>INDUCTION</scope>
</reference>
<feature type="signal peptide" evidence="2">
    <location>
        <begin position="1"/>
        <end position="31"/>
    </location>
</feature>
<feature type="chain" id="PRO_0000360764" description="ABC transporter permease YtrF">
    <location>
        <begin position="32"/>
        <end position="436"/>
    </location>
</feature>
<feature type="transmembrane region" description="Helical" evidence="1">
    <location>
        <begin position="293"/>
        <end position="313"/>
    </location>
</feature>
<feature type="transmembrane region" description="Helical" evidence="1">
    <location>
        <begin position="350"/>
        <end position="370"/>
    </location>
</feature>
<feature type="transmembrane region" description="Helical" evidence="1">
    <location>
        <begin position="396"/>
        <end position="416"/>
    </location>
</feature>
<feature type="coiled-coil region" evidence="1">
    <location>
        <begin position="115"/>
        <end position="165"/>
    </location>
</feature>
<feature type="lipid moiety-binding region" description="N-palmitoyl cysteine" evidence="2">
    <location>
        <position position="32"/>
    </location>
</feature>
<feature type="lipid moiety-binding region" description="S-diacylglycerol cysteine" evidence="2">
    <location>
        <position position="32"/>
    </location>
</feature>
<gene>
    <name type="primary">ytrF</name>
    <name type="ordered locus">BSU30410</name>
</gene>
<accession>O35005</accession>
<accession>Q795Q4</accession>
<proteinExistence type="evidence at transcript level"/>
<name>YTRF_BACSU</name>
<organism>
    <name type="scientific">Bacillus subtilis (strain 168)</name>
    <dbReference type="NCBI Taxonomy" id="224308"/>
    <lineage>
        <taxon>Bacteria</taxon>
        <taxon>Bacillati</taxon>
        <taxon>Bacillota</taxon>
        <taxon>Bacilli</taxon>
        <taxon>Bacillales</taxon>
        <taxon>Bacillaceae</taxon>
        <taxon>Bacillus</taxon>
    </lineage>
</organism>
<sequence length="436" mass="48421">MRFKDQVHFIRRNMKKNRLRVFMTILATTMACAFLVVLSSVGFGIQKTITDMTMSQQIVTKVSVMGKEGDKPIKKADLEKYDHVRSVVERTQVYEPNKATLGNRTNESSNLIFTNMNDELKANMELEKGRVAKSENEIVVGYDFAKRLLTKKESEEYNKKIEEAKGNPEDIKEPKGYTKDILNKTIELSVSKTDSKTGDVTKTKTYDFKIVGITKKPSQDWMEDSNIFISDQFKKDFSEFLDFKGGNVETNIGVFADKFENVEQLTNDLTDDGYYVTSVTTELEGANTFFMVFKIGLIFVGCIAVIISAIGIFNTMTMAVTERTQEIGIMKAIGASPSIIRRMFLMESAYIGILGCVIGIIISYGVSYLVNLAVPMILAATSGGDAGDLNYTFSYIPASLVIIAVVICGGVAVISGMNPARKATKTNVLTALRREL</sequence>
<comment type="function">
    <text evidence="3">Part of the ABC transporter complex YtrBCDEF that plays a role in acetoin utilization during stationary phase and sporulation.</text>
</comment>
<comment type="subunit">
    <text evidence="4">The complex is composed of 2 ATP-binding proteins (YtrB and YtrE), 2 transmembrane proteins (YtrC and YtrD) and a solute-binding protein (YtrF).</text>
</comment>
<comment type="subcellular location">
    <subcellularLocation>
        <location evidence="2">Cell membrane</location>
        <topology evidence="2">Lipid-anchor</topology>
    </subcellularLocation>
    <subcellularLocation>
        <location evidence="2">Cell membrane</location>
        <topology evidence="4">Multi-pass membrane protein</topology>
    </subcellularLocation>
</comment>
<comment type="developmental stage">
    <text evidence="3">Expressed early in the stationary phase.</text>
</comment>
<comment type="induction">
    <text evidence="3">Negatively regulated by YtrA.</text>
</comment>
<comment type="similarity">
    <text evidence="4">Belongs to the ABC-4 integral membrane protein family.</text>
</comment>
<protein>
    <recommendedName>
        <fullName>ABC transporter permease YtrF</fullName>
    </recommendedName>
</protein>